<accession>P95544</accession>
<proteinExistence type="evidence at protein level"/>
<comment type="function">
    <text evidence="3">Catalyzes the reversible oxidative deamination of glutamate to alpha-ketoglutarate and ammonia. P.ruminicola possess both NADP(H)- and NAD(H)-dependent activities on the same enzyme, suggesting that both anabolic and catabolic forms of the enzyme might occur.</text>
</comment>
<comment type="catalytic activity">
    <reaction evidence="3">
        <text>L-glutamate + NAD(+) + H2O = 2-oxoglutarate + NH4(+) + NADH + H(+)</text>
        <dbReference type="Rhea" id="RHEA:15133"/>
        <dbReference type="ChEBI" id="CHEBI:15377"/>
        <dbReference type="ChEBI" id="CHEBI:15378"/>
        <dbReference type="ChEBI" id="CHEBI:16810"/>
        <dbReference type="ChEBI" id="CHEBI:28938"/>
        <dbReference type="ChEBI" id="CHEBI:29985"/>
        <dbReference type="ChEBI" id="CHEBI:57540"/>
        <dbReference type="ChEBI" id="CHEBI:57945"/>
        <dbReference type="EC" id="1.4.1.3"/>
    </reaction>
</comment>
<comment type="catalytic activity">
    <reaction evidence="3">
        <text>L-glutamate + NADP(+) + H2O = 2-oxoglutarate + NH4(+) + NADPH + H(+)</text>
        <dbReference type="Rhea" id="RHEA:11612"/>
        <dbReference type="ChEBI" id="CHEBI:15377"/>
        <dbReference type="ChEBI" id="CHEBI:15378"/>
        <dbReference type="ChEBI" id="CHEBI:16810"/>
        <dbReference type="ChEBI" id="CHEBI:28938"/>
        <dbReference type="ChEBI" id="CHEBI:29985"/>
        <dbReference type="ChEBI" id="CHEBI:57783"/>
        <dbReference type="ChEBI" id="CHEBI:58349"/>
        <dbReference type="EC" id="1.4.1.3"/>
    </reaction>
</comment>
<comment type="subunit">
    <text evidence="1">Homohexamer.</text>
</comment>
<comment type="similarity">
    <text evidence="4">Belongs to the Glu/Leu/Phe/Val dehydrogenases family.</text>
</comment>
<keyword id="KW-0520">NAD</keyword>
<keyword id="KW-0521">NADP</keyword>
<keyword id="KW-0560">Oxidoreductase</keyword>
<reference key="1">
    <citation type="journal article" date="1996" name="Appl. Environ. Microbiol.">
        <title>The NAD(P)H-dependent glutamate dehydrogenase activities of Prevotella ruminicola B(1)4 can be attributed to one enzyme (GdhA), and gdhA expression is regulated in response to the nitrogen source available for growth.</title>
        <authorList>
            <person name="Wen Z."/>
            <person name="Morrison M."/>
        </authorList>
    </citation>
    <scope>NUCLEOTIDE SEQUENCE [GENOMIC DNA]</scope>
    <scope>FUNCTION</scope>
    <scope>CATALYTIC ACTIVITY</scope>
    <scope>SUBSTRATE SPECIFICITY</scope>
    <source>
        <strain>B14</strain>
    </source>
</reference>
<sequence>MKATEVIEKLKAKFPGQPEYIQAVSQVLGTIEEEYNKHPEFEKANLIERLCVPDRILQFRVSWVDDNGNVQTNLGYRVQHNNAIGPYKGGLRFHKSVNASILKFLAFEQTFKNSLTTLPMGGAKGGSDFDPHGKSDMEVMRFCQAFMNELYRLIGPDEDVPAGDIGVGGREVGYMFGQYKKLTHQFQGILTGKGLEFGGSLIRPEATGYGNVYFLEDMLKTRGESLEGKTVLVSGSGNVAQYTIEKLLQLGAKPVTCSDSNGYIYDPDGIDAEKLAFIMELKNVKRGRIKEYAEKYGVKYVENARPWGEKADIATPCATQDEINEAEAKTLIANGVFAVSEGANMPTEPAAIKVFQDAKILYCPGKASNAGGVATSGLEMSQNSERLSWTREEVDTKLHNIMDEIHANCVKYGTEPDGYINYVKGANVAGFMKVAKAMMAQGIY</sequence>
<gene>
    <name type="primary">gdhA</name>
</gene>
<organism>
    <name type="scientific">Xylanibacter ruminicola</name>
    <name type="common">Prevotella ruminicola</name>
    <dbReference type="NCBI Taxonomy" id="839"/>
    <lineage>
        <taxon>Bacteria</taxon>
        <taxon>Pseudomonadati</taxon>
        <taxon>Bacteroidota</taxon>
        <taxon>Bacteroidia</taxon>
        <taxon>Bacteroidales</taxon>
        <taxon>Prevotellaceae</taxon>
        <taxon>Xylanibacter</taxon>
    </lineage>
</organism>
<protein>
    <recommendedName>
        <fullName>NAD(P)-specific glutamate dehydrogenase</fullName>
        <shortName>NAD(P)-GDH</shortName>
        <ecNumber>1.4.1.3</ecNumber>
    </recommendedName>
    <alternativeName>
        <fullName>NAD(P)H-dependent glutamate dehydrogenase</fullName>
    </alternativeName>
</protein>
<dbReference type="EC" id="1.4.1.3"/>
<dbReference type="EMBL" id="U82240">
    <property type="protein sequence ID" value="AAB40142.1"/>
    <property type="molecule type" value="Genomic_DNA"/>
</dbReference>
<dbReference type="PIR" id="T10487">
    <property type="entry name" value="T10487"/>
</dbReference>
<dbReference type="SMR" id="P95544"/>
<dbReference type="GO" id="GO:0005737">
    <property type="term" value="C:cytoplasm"/>
    <property type="evidence" value="ECO:0000250"/>
    <property type="project" value="UniProtKB"/>
</dbReference>
<dbReference type="GO" id="GO:0005829">
    <property type="term" value="C:cytosol"/>
    <property type="evidence" value="ECO:0007669"/>
    <property type="project" value="TreeGrafter"/>
</dbReference>
<dbReference type="GO" id="GO:0004352">
    <property type="term" value="F:glutamate dehydrogenase (NAD+) activity"/>
    <property type="evidence" value="ECO:0007669"/>
    <property type="project" value="RHEA"/>
</dbReference>
<dbReference type="GO" id="GO:0004354">
    <property type="term" value="F:glutamate dehydrogenase (NADP+) activity"/>
    <property type="evidence" value="ECO:0007669"/>
    <property type="project" value="RHEA"/>
</dbReference>
<dbReference type="GO" id="GO:0004353">
    <property type="term" value="F:glutamate dehydrogenase [NAD(P)+] activity"/>
    <property type="evidence" value="ECO:0000315"/>
    <property type="project" value="UniProtKB"/>
</dbReference>
<dbReference type="GO" id="GO:0006537">
    <property type="term" value="P:glutamate biosynthetic process"/>
    <property type="evidence" value="ECO:0000315"/>
    <property type="project" value="UniProtKB"/>
</dbReference>
<dbReference type="CDD" id="cd05313">
    <property type="entry name" value="NAD_bind_2_Glu_DH"/>
    <property type="match status" value="1"/>
</dbReference>
<dbReference type="FunFam" id="1.10.285.10:FF:000001">
    <property type="entry name" value="Glutamate dehydrogenase"/>
    <property type="match status" value="1"/>
</dbReference>
<dbReference type="FunFam" id="3.40.50.10860:FF:000002">
    <property type="entry name" value="Glutamate dehydrogenase"/>
    <property type="match status" value="1"/>
</dbReference>
<dbReference type="FunFam" id="3.40.50.720:FF:000030">
    <property type="entry name" value="Glutamate dehydrogenase"/>
    <property type="match status" value="1"/>
</dbReference>
<dbReference type="Gene3D" id="1.10.285.10">
    <property type="entry name" value="Glutamate Dehydrogenase, chain A, domain 3"/>
    <property type="match status" value="2"/>
</dbReference>
<dbReference type="Gene3D" id="3.40.50.10860">
    <property type="entry name" value="Leucine Dehydrogenase, chain A, domain 1"/>
    <property type="match status" value="1"/>
</dbReference>
<dbReference type="Gene3D" id="3.40.50.720">
    <property type="entry name" value="NAD(P)-binding Rossmann-like Domain"/>
    <property type="match status" value="1"/>
</dbReference>
<dbReference type="InterPro" id="IPR046346">
    <property type="entry name" value="Aminoacid_DH-like_N_sf"/>
</dbReference>
<dbReference type="InterPro" id="IPR006095">
    <property type="entry name" value="Glu/Leu/Phe/Val/Trp_DH"/>
</dbReference>
<dbReference type="InterPro" id="IPR006096">
    <property type="entry name" value="Glu/Leu/Phe/Val/Trp_DH_C"/>
</dbReference>
<dbReference type="InterPro" id="IPR006097">
    <property type="entry name" value="Glu/Leu/Phe/Val/Trp_DH_dimer"/>
</dbReference>
<dbReference type="InterPro" id="IPR033524">
    <property type="entry name" value="Glu/Leu/Phe/Val_DH_AS"/>
</dbReference>
<dbReference type="InterPro" id="IPR014362">
    <property type="entry name" value="Glu_DH"/>
</dbReference>
<dbReference type="InterPro" id="IPR050724">
    <property type="entry name" value="Glu_Leu_Phe_Val_DH"/>
</dbReference>
<dbReference type="InterPro" id="IPR036291">
    <property type="entry name" value="NAD(P)-bd_dom_sf"/>
</dbReference>
<dbReference type="InterPro" id="IPR033922">
    <property type="entry name" value="NAD_bind_Glu_DH"/>
</dbReference>
<dbReference type="NCBIfam" id="NF006929">
    <property type="entry name" value="PRK09414.1"/>
    <property type="match status" value="1"/>
</dbReference>
<dbReference type="NCBIfam" id="NF010634">
    <property type="entry name" value="PRK14031.1"/>
    <property type="match status" value="1"/>
</dbReference>
<dbReference type="PANTHER" id="PTHR43571">
    <property type="entry name" value="NADP-SPECIFIC GLUTAMATE DEHYDROGENASE 1-RELATED"/>
    <property type="match status" value="1"/>
</dbReference>
<dbReference type="PANTHER" id="PTHR43571:SF1">
    <property type="entry name" value="NADP-SPECIFIC GLUTAMATE DEHYDROGENASE 1-RELATED"/>
    <property type="match status" value="1"/>
</dbReference>
<dbReference type="Pfam" id="PF00208">
    <property type="entry name" value="ELFV_dehydrog"/>
    <property type="match status" value="1"/>
</dbReference>
<dbReference type="Pfam" id="PF02812">
    <property type="entry name" value="ELFV_dehydrog_N"/>
    <property type="match status" value="1"/>
</dbReference>
<dbReference type="PIRSF" id="PIRSF000185">
    <property type="entry name" value="Glu_DH"/>
    <property type="match status" value="1"/>
</dbReference>
<dbReference type="PRINTS" id="PR00082">
    <property type="entry name" value="GLFDHDRGNASE"/>
</dbReference>
<dbReference type="SMART" id="SM00839">
    <property type="entry name" value="ELFV_dehydrog"/>
    <property type="match status" value="1"/>
</dbReference>
<dbReference type="SUPFAM" id="SSF53223">
    <property type="entry name" value="Aminoacid dehydrogenase-like, N-terminal domain"/>
    <property type="match status" value="1"/>
</dbReference>
<dbReference type="SUPFAM" id="SSF51735">
    <property type="entry name" value="NAD(P)-binding Rossmann-fold domains"/>
    <property type="match status" value="1"/>
</dbReference>
<dbReference type="PROSITE" id="PS00074">
    <property type="entry name" value="GLFV_DEHYDROGENASE"/>
    <property type="match status" value="1"/>
</dbReference>
<name>DHE4_XYLRU</name>
<feature type="chain" id="PRO_0000182773" description="NAD(P)-specific glutamate dehydrogenase">
    <location>
        <begin position="1"/>
        <end position="444"/>
    </location>
</feature>
<feature type="active site" description="Proton donor" evidence="2">
    <location>
        <position position="124"/>
    </location>
</feature>
<feature type="binding site" evidence="1">
    <location>
        <position position="88"/>
    </location>
    <ligand>
        <name>substrate</name>
    </ligand>
</feature>
<feature type="binding site" evidence="1">
    <location>
        <position position="109"/>
    </location>
    <ligand>
        <name>substrate</name>
    </ligand>
</feature>
<feature type="binding site" evidence="1">
    <location>
        <position position="112"/>
    </location>
    <ligand>
        <name>substrate</name>
    </ligand>
</feature>
<feature type="binding site" evidence="1">
    <location>
        <position position="163"/>
    </location>
    <ligand>
        <name>substrate</name>
    </ligand>
</feature>
<feature type="binding site" evidence="1">
    <location>
        <position position="207"/>
    </location>
    <ligand>
        <name>NADP(+)</name>
        <dbReference type="ChEBI" id="CHEBI:58349"/>
    </ligand>
</feature>
<feature type="binding site" evidence="1">
    <location>
        <position position="238"/>
    </location>
    <ligand>
        <name>NADP(+)</name>
        <dbReference type="ChEBI" id="CHEBI:58349"/>
    </ligand>
</feature>
<feature type="binding site" evidence="1">
    <location>
        <position position="376"/>
    </location>
    <ligand>
        <name>substrate</name>
    </ligand>
</feature>
<feature type="site" description="Important for catalysis" evidence="1">
    <location>
        <position position="164"/>
    </location>
</feature>
<evidence type="ECO:0000250" key="1"/>
<evidence type="ECO:0000255" key="2">
    <source>
        <dbReference type="PROSITE-ProRule" id="PRU10011"/>
    </source>
</evidence>
<evidence type="ECO:0000269" key="3">
    <source>
    </source>
</evidence>
<evidence type="ECO:0000305" key="4"/>